<protein>
    <recommendedName>
        <fullName>Uncharacterized protein CPn_0705/CP_0041/CPj0705/CpB0732</fullName>
    </recommendedName>
</protein>
<reference key="1">
    <citation type="journal article" date="1999" name="Nat. Genet.">
        <title>Comparative genomes of Chlamydia pneumoniae and C. trachomatis.</title>
        <authorList>
            <person name="Kalman S."/>
            <person name="Mitchell W.P."/>
            <person name="Marathe R."/>
            <person name="Lammel C.J."/>
            <person name="Fan J."/>
            <person name="Hyman R.W."/>
            <person name="Olinger L."/>
            <person name="Grimwood J."/>
            <person name="Davis R.W."/>
            <person name="Stephens R.S."/>
        </authorList>
    </citation>
    <scope>NUCLEOTIDE SEQUENCE [LARGE SCALE GENOMIC DNA]</scope>
    <source>
        <strain>CWL029</strain>
    </source>
</reference>
<reference key="2">
    <citation type="journal article" date="2000" name="Nucleic Acids Res.">
        <title>Genome sequences of Chlamydia trachomatis MoPn and Chlamydia pneumoniae AR39.</title>
        <authorList>
            <person name="Read T.D."/>
            <person name="Brunham R.C."/>
            <person name="Shen C."/>
            <person name="Gill S.R."/>
            <person name="Heidelberg J.F."/>
            <person name="White O."/>
            <person name="Hickey E.K."/>
            <person name="Peterson J.D."/>
            <person name="Utterback T.R."/>
            <person name="Berry K.J."/>
            <person name="Bass S."/>
            <person name="Linher K.D."/>
            <person name="Weidman J.F."/>
            <person name="Khouri H.M."/>
            <person name="Craven B."/>
            <person name="Bowman C."/>
            <person name="Dodson R.J."/>
            <person name="Gwinn M.L."/>
            <person name="Nelson W.C."/>
            <person name="DeBoy R.T."/>
            <person name="Kolonay J.F."/>
            <person name="McClarty G."/>
            <person name="Salzberg S.L."/>
            <person name="Eisen J.A."/>
            <person name="Fraser C.M."/>
        </authorList>
    </citation>
    <scope>NUCLEOTIDE SEQUENCE [LARGE SCALE GENOMIC DNA]</scope>
    <source>
        <strain>AR39</strain>
    </source>
</reference>
<reference key="3">
    <citation type="journal article" date="2000" name="Nucleic Acids Res.">
        <title>Comparison of whole genome sequences of Chlamydia pneumoniae J138 from Japan and CWL029 from USA.</title>
        <authorList>
            <person name="Shirai M."/>
            <person name="Hirakawa H."/>
            <person name="Kimoto M."/>
            <person name="Tabuchi M."/>
            <person name="Kishi F."/>
            <person name="Ouchi K."/>
            <person name="Shiba T."/>
            <person name="Ishii K."/>
            <person name="Hattori M."/>
            <person name="Kuhara S."/>
            <person name="Nakazawa T."/>
        </authorList>
    </citation>
    <scope>NUCLEOTIDE SEQUENCE [LARGE SCALE GENOMIC DNA]</scope>
    <source>
        <strain>J138</strain>
    </source>
</reference>
<reference key="4">
    <citation type="submission" date="2000-01" db="EMBL/GenBank/DDBJ databases">
        <title>Genomic sequence comparison of two unrelated isolates of Chlamydia pneumoniae from Japan and U.S.</title>
        <authorList>
            <person name="Hirakawa H."/>
            <person name="Shirai M."/>
            <person name="Kuhara S."/>
        </authorList>
    </citation>
    <scope>NUCLEOTIDE SEQUENCE [GENOMIC DNA]</scope>
    <source>
        <strain>J138</strain>
    </source>
</reference>
<reference key="5">
    <citation type="submission" date="2002-05" db="EMBL/GenBank/DDBJ databases">
        <title>The genome sequence of Chlamydia pneumoniae TW183 and comparison with other Chlamydia strains based on whole genome sequence analysis.</title>
        <authorList>
            <person name="Geng M.M."/>
            <person name="Schuhmacher A."/>
            <person name="Muehldorfer I."/>
            <person name="Bensch K.W."/>
            <person name="Schaefer K.P."/>
            <person name="Schneider S."/>
            <person name="Pohl T."/>
            <person name="Essig A."/>
            <person name="Marre R."/>
            <person name="Melchers K."/>
        </authorList>
    </citation>
    <scope>NUCLEOTIDE SEQUENCE [LARGE SCALE GENOMIC DNA]</scope>
    <source>
        <strain>TW-183</strain>
    </source>
</reference>
<proteinExistence type="inferred from homology"/>
<dbReference type="EMBL" id="AE001363">
    <property type="protein sequence ID" value="AAD18844.1"/>
    <property type="molecule type" value="Genomic_DNA"/>
</dbReference>
<dbReference type="EMBL" id="AE002161">
    <property type="protein sequence ID" value="AAF37936.1"/>
    <property type="molecule type" value="Genomic_DNA"/>
</dbReference>
<dbReference type="EMBL" id="BA000008">
    <property type="protein sequence ID" value="BAA98912.1"/>
    <property type="molecule type" value="Genomic_DNA"/>
</dbReference>
<dbReference type="EMBL" id="AB035947">
    <property type="protein sequence ID" value="BAA88655.1"/>
    <property type="molecule type" value="Genomic_DNA"/>
</dbReference>
<dbReference type="EMBL" id="AE009440">
    <property type="protein sequence ID" value="AAP98661.1"/>
    <property type="molecule type" value="Genomic_DNA"/>
</dbReference>
<dbReference type="PIR" id="A72046">
    <property type="entry name" value="A72046"/>
</dbReference>
<dbReference type="PIR" id="F86578">
    <property type="entry name" value="F86578"/>
</dbReference>
<dbReference type="RefSeq" id="NP_224901.1">
    <property type="nucleotide sequence ID" value="NC_000922.1"/>
</dbReference>
<dbReference type="RefSeq" id="WP_010883343.1">
    <property type="nucleotide sequence ID" value="NZ_LN847257.1"/>
</dbReference>
<dbReference type="STRING" id="406984.CPK_ORF00109"/>
<dbReference type="GeneID" id="45050760"/>
<dbReference type="KEGG" id="cpa:CP_0041"/>
<dbReference type="KEGG" id="cpj:CPj0705"/>
<dbReference type="KEGG" id="cpn:CPn_0705"/>
<dbReference type="KEGG" id="cpt:CpB0732"/>
<dbReference type="PATRIC" id="fig|115713.3.peg.779"/>
<dbReference type="HOGENOM" id="CLU_985881_0_0_0"/>
<dbReference type="OrthoDB" id="17909at2"/>
<dbReference type="Proteomes" id="UP000000583">
    <property type="component" value="Chromosome"/>
</dbReference>
<dbReference type="Proteomes" id="UP000000801">
    <property type="component" value="Chromosome"/>
</dbReference>
<dbReference type="InterPro" id="IPR035359">
    <property type="entry name" value="DUF5421"/>
</dbReference>
<dbReference type="Pfam" id="PF17458">
    <property type="entry name" value="DUF5421"/>
    <property type="match status" value="1"/>
</dbReference>
<sequence length="280" mass="30951">MELKKTAESLYSAKTDNHTVYQNSPEPRDSRDVKVFSLEGKQTRQEKTTSSKGNTRTESRKFADEEKRVDDEIAEVGSKEEEQESQEFCLAENAFAGMSLIDIAAAGSAEAVVEVAPIAVSSIDTQWIENIILSTVESMVISEINGEQLVELVLDASSSVPEAFVGANLTLVQSGQDLSVKFSSFVDATQMAEAADLVTNNPSQLSSLVSALKGHQLTLKEFSVGNLLVQLPKIEEVQTPLHMIASTIRHREEKDQRDQNQKQKQDDKEQDSYKIEEARL</sequence>
<gene>
    <name type="ordered locus">CPn_0705</name>
    <name type="ordered locus">CP_0041</name>
    <name type="ordered locus">CPj0705</name>
    <name type="ordered locus">CpB0732</name>
</gene>
<name>Y705_CHLPN</name>
<comment type="similarity">
    <text evidence="2">Belongs to the chlamydial CPn_0705/CT_671/TC_0042 family.</text>
</comment>
<organism>
    <name type="scientific">Chlamydia pneumoniae</name>
    <name type="common">Chlamydophila pneumoniae</name>
    <dbReference type="NCBI Taxonomy" id="83558"/>
    <lineage>
        <taxon>Bacteria</taxon>
        <taxon>Pseudomonadati</taxon>
        <taxon>Chlamydiota</taxon>
        <taxon>Chlamydiia</taxon>
        <taxon>Chlamydiales</taxon>
        <taxon>Chlamydiaceae</taxon>
        <taxon>Chlamydia/Chlamydophila group</taxon>
        <taxon>Chlamydia</taxon>
    </lineage>
</organism>
<feature type="chain" id="PRO_0000218413" description="Uncharacterized protein CPn_0705/CP_0041/CPj0705/CpB0732">
    <location>
        <begin position="1"/>
        <end position="280"/>
    </location>
</feature>
<feature type="region of interest" description="Disordered" evidence="1">
    <location>
        <begin position="1"/>
        <end position="83"/>
    </location>
</feature>
<feature type="region of interest" description="Disordered" evidence="1">
    <location>
        <begin position="248"/>
        <end position="280"/>
    </location>
</feature>
<feature type="compositionally biased region" description="Polar residues" evidence="1">
    <location>
        <begin position="12"/>
        <end position="25"/>
    </location>
</feature>
<feature type="compositionally biased region" description="Basic and acidic residues" evidence="1">
    <location>
        <begin position="41"/>
        <end position="71"/>
    </location>
</feature>
<feature type="compositionally biased region" description="Basic and acidic residues" evidence="1">
    <location>
        <begin position="249"/>
        <end position="280"/>
    </location>
</feature>
<accession>Q9Z7K0</accession>
<evidence type="ECO:0000256" key="1">
    <source>
        <dbReference type="SAM" id="MobiDB-lite"/>
    </source>
</evidence>
<evidence type="ECO:0000305" key="2"/>